<accession>O32237</accession>
<protein>
    <recommendedName>
        <fullName>Uncharacterized HTH-type transcriptional regulator RghRB</fullName>
    </recommendedName>
</protein>
<keyword id="KW-0238">DNA-binding</keyword>
<keyword id="KW-1185">Reference proteome</keyword>
<keyword id="KW-0804">Transcription</keyword>
<keyword id="KW-0805">Transcription regulation</keyword>
<feature type="chain" id="PRO_0000383641" description="Uncharacterized HTH-type transcriptional regulator RghRB">
    <location>
        <begin position="1"/>
        <end position="139"/>
    </location>
</feature>
<feature type="domain" description="HTH cro/C1-type" evidence="1">
    <location>
        <begin position="8"/>
        <end position="63"/>
    </location>
</feature>
<feature type="DNA-binding region" description="H-T-H motif" evidence="1">
    <location>
        <begin position="19"/>
        <end position="38"/>
    </location>
</feature>
<organism>
    <name type="scientific">Bacillus subtilis (strain 168)</name>
    <dbReference type="NCBI Taxonomy" id="224308"/>
    <lineage>
        <taxon>Bacteria</taxon>
        <taxon>Bacillati</taxon>
        <taxon>Bacillota</taxon>
        <taxon>Bacilli</taxon>
        <taxon>Bacillales</taxon>
        <taxon>Bacillaceae</taxon>
        <taxon>Bacillus</taxon>
    </lineage>
</organism>
<dbReference type="EMBL" id="AL009126">
    <property type="protein sequence ID" value="CAB15372.1"/>
    <property type="molecule type" value="Genomic_DNA"/>
</dbReference>
<dbReference type="PIR" id="D70028">
    <property type="entry name" value="D70028"/>
</dbReference>
<dbReference type="RefSeq" id="NP_391247.1">
    <property type="nucleotide sequence ID" value="NC_000964.3"/>
</dbReference>
<dbReference type="RefSeq" id="WP_003228377.1">
    <property type="nucleotide sequence ID" value="NZ_OZ025638.1"/>
</dbReference>
<dbReference type="FunCoup" id="O32237">
    <property type="interactions" value="7"/>
</dbReference>
<dbReference type="STRING" id="224308.BSU33670"/>
<dbReference type="PaxDb" id="224308-BSU33670"/>
<dbReference type="EnsemblBacteria" id="CAB15372">
    <property type="protein sequence ID" value="CAB15372"/>
    <property type="gene ID" value="BSU_33670"/>
</dbReference>
<dbReference type="GeneID" id="938539"/>
<dbReference type="KEGG" id="bsu:BSU33670"/>
<dbReference type="PATRIC" id="fig|224308.179.peg.3652"/>
<dbReference type="eggNOG" id="COG1396">
    <property type="taxonomic scope" value="Bacteria"/>
</dbReference>
<dbReference type="InParanoid" id="O32237"/>
<dbReference type="OrthoDB" id="9812960at2"/>
<dbReference type="PhylomeDB" id="O32237"/>
<dbReference type="BioCyc" id="BSUB:BSU33670-MONOMER"/>
<dbReference type="Proteomes" id="UP000001570">
    <property type="component" value="Chromosome"/>
</dbReference>
<dbReference type="GO" id="GO:0003677">
    <property type="term" value="F:DNA binding"/>
    <property type="evidence" value="ECO:0007669"/>
    <property type="project" value="UniProtKB-KW"/>
</dbReference>
<dbReference type="GO" id="GO:0003700">
    <property type="term" value="F:DNA-binding transcription factor activity"/>
    <property type="evidence" value="ECO:0000318"/>
    <property type="project" value="GO_Central"/>
</dbReference>
<dbReference type="GO" id="GO:0006355">
    <property type="term" value="P:regulation of DNA-templated transcription"/>
    <property type="evidence" value="ECO:0000318"/>
    <property type="project" value="GO_Central"/>
</dbReference>
<dbReference type="CDD" id="cd00093">
    <property type="entry name" value="HTH_XRE"/>
    <property type="match status" value="1"/>
</dbReference>
<dbReference type="Gene3D" id="1.10.260.40">
    <property type="entry name" value="lambda repressor-like DNA-binding domains"/>
    <property type="match status" value="1"/>
</dbReference>
<dbReference type="InterPro" id="IPR050807">
    <property type="entry name" value="Bact_TransReg_Diox"/>
</dbReference>
<dbReference type="InterPro" id="IPR001387">
    <property type="entry name" value="Cro/C1-type_HTH"/>
</dbReference>
<dbReference type="InterPro" id="IPR010982">
    <property type="entry name" value="Lambda_DNA-bd_dom_sf"/>
</dbReference>
<dbReference type="InterPro" id="IPR016759">
    <property type="entry name" value="RghR"/>
</dbReference>
<dbReference type="PANTHER" id="PTHR46797">
    <property type="entry name" value="HTH-TYPE TRANSCRIPTIONAL REGULATOR"/>
    <property type="match status" value="1"/>
</dbReference>
<dbReference type="PANTHER" id="PTHR46797:SF1">
    <property type="entry name" value="METHYLPHOSPHONATE SYNTHASE"/>
    <property type="match status" value="1"/>
</dbReference>
<dbReference type="Pfam" id="PF13560">
    <property type="entry name" value="HTH_31"/>
    <property type="match status" value="1"/>
</dbReference>
<dbReference type="PIRSF" id="PIRSF019364">
    <property type="entry name" value="RapGH_repressor"/>
    <property type="match status" value="1"/>
</dbReference>
<dbReference type="SMART" id="SM00530">
    <property type="entry name" value="HTH_XRE"/>
    <property type="match status" value="1"/>
</dbReference>
<dbReference type="SUPFAM" id="SSF47413">
    <property type="entry name" value="lambda repressor-like DNA-binding domains"/>
    <property type="match status" value="1"/>
</dbReference>
<dbReference type="PROSITE" id="PS50943">
    <property type="entry name" value="HTH_CROC1"/>
    <property type="match status" value="1"/>
</dbReference>
<name>RGHRB_BACSU</name>
<sequence>MSPFGQQLRELRRARKLTVNQLAVYSGISSATISKIENGKRGTPKPATIKKLAAVLKVPYENLMAAAGHIQAFPEEIREASEGYQSVYEIYQTAVTRGAEHLPIFNSQKWEHLSKQDIENLSKYFDFLSSEAKKRASSS</sequence>
<proteinExistence type="predicted"/>
<gene>
    <name type="primary">rghRB</name>
    <name type="synonym">yvaO</name>
    <name type="ordered locus">BSU33670</name>
</gene>
<evidence type="ECO:0000255" key="1">
    <source>
        <dbReference type="PROSITE-ProRule" id="PRU00257"/>
    </source>
</evidence>
<reference key="1">
    <citation type="journal article" date="1997" name="Nature">
        <title>The complete genome sequence of the Gram-positive bacterium Bacillus subtilis.</title>
        <authorList>
            <person name="Kunst F."/>
            <person name="Ogasawara N."/>
            <person name="Moszer I."/>
            <person name="Albertini A.M."/>
            <person name="Alloni G."/>
            <person name="Azevedo V."/>
            <person name="Bertero M.G."/>
            <person name="Bessieres P."/>
            <person name="Bolotin A."/>
            <person name="Borchert S."/>
            <person name="Borriss R."/>
            <person name="Boursier L."/>
            <person name="Brans A."/>
            <person name="Braun M."/>
            <person name="Brignell S.C."/>
            <person name="Bron S."/>
            <person name="Brouillet S."/>
            <person name="Bruschi C.V."/>
            <person name="Caldwell B."/>
            <person name="Capuano V."/>
            <person name="Carter N.M."/>
            <person name="Choi S.-K."/>
            <person name="Codani J.-J."/>
            <person name="Connerton I.F."/>
            <person name="Cummings N.J."/>
            <person name="Daniel R.A."/>
            <person name="Denizot F."/>
            <person name="Devine K.M."/>
            <person name="Duesterhoeft A."/>
            <person name="Ehrlich S.D."/>
            <person name="Emmerson P.T."/>
            <person name="Entian K.-D."/>
            <person name="Errington J."/>
            <person name="Fabret C."/>
            <person name="Ferrari E."/>
            <person name="Foulger D."/>
            <person name="Fritz C."/>
            <person name="Fujita M."/>
            <person name="Fujita Y."/>
            <person name="Fuma S."/>
            <person name="Galizzi A."/>
            <person name="Galleron N."/>
            <person name="Ghim S.-Y."/>
            <person name="Glaser P."/>
            <person name="Goffeau A."/>
            <person name="Golightly E.J."/>
            <person name="Grandi G."/>
            <person name="Guiseppi G."/>
            <person name="Guy B.J."/>
            <person name="Haga K."/>
            <person name="Haiech J."/>
            <person name="Harwood C.R."/>
            <person name="Henaut A."/>
            <person name="Hilbert H."/>
            <person name="Holsappel S."/>
            <person name="Hosono S."/>
            <person name="Hullo M.-F."/>
            <person name="Itaya M."/>
            <person name="Jones L.-M."/>
            <person name="Joris B."/>
            <person name="Karamata D."/>
            <person name="Kasahara Y."/>
            <person name="Klaerr-Blanchard M."/>
            <person name="Klein C."/>
            <person name="Kobayashi Y."/>
            <person name="Koetter P."/>
            <person name="Koningstein G."/>
            <person name="Krogh S."/>
            <person name="Kumano M."/>
            <person name="Kurita K."/>
            <person name="Lapidus A."/>
            <person name="Lardinois S."/>
            <person name="Lauber J."/>
            <person name="Lazarevic V."/>
            <person name="Lee S.-M."/>
            <person name="Levine A."/>
            <person name="Liu H."/>
            <person name="Masuda S."/>
            <person name="Mauel C."/>
            <person name="Medigue C."/>
            <person name="Medina N."/>
            <person name="Mellado R.P."/>
            <person name="Mizuno M."/>
            <person name="Moestl D."/>
            <person name="Nakai S."/>
            <person name="Noback M."/>
            <person name="Noone D."/>
            <person name="O'Reilly M."/>
            <person name="Ogawa K."/>
            <person name="Ogiwara A."/>
            <person name="Oudega B."/>
            <person name="Park S.-H."/>
            <person name="Parro V."/>
            <person name="Pohl T.M."/>
            <person name="Portetelle D."/>
            <person name="Porwollik S."/>
            <person name="Prescott A.M."/>
            <person name="Presecan E."/>
            <person name="Pujic P."/>
            <person name="Purnelle B."/>
            <person name="Rapoport G."/>
            <person name="Rey M."/>
            <person name="Reynolds S."/>
            <person name="Rieger M."/>
            <person name="Rivolta C."/>
            <person name="Rocha E."/>
            <person name="Roche B."/>
            <person name="Rose M."/>
            <person name="Sadaie Y."/>
            <person name="Sato T."/>
            <person name="Scanlan E."/>
            <person name="Schleich S."/>
            <person name="Schroeter R."/>
            <person name="Scoffone F."/>
            <person name="Sekiguchi J."/>
            <person name="Sekowska A."/>
            <person name="Seror S.J."/>
            <person name="Serror P."/>
            <person name="Shin B.-S."/>
            <person name="Soldo B."/>
            <person name="Sorokin A."/>
            <person name="Tacconi E."/>
            <person name="Takagi T."/>
            <person name="Takahashi H."/>
            <person name="Takemaru K."/>
            <person name="Takeuchi M."/>
            <person name="Tamakoshi A."/>
            <person name="Tanaka T."/>
            <person name="Terpstra P."/>
            <person name="Tognoni A."/>
            <person name="Tosato V."/>
            <person name="Uchiyama S."/>
            <person name="Vandenbol M."/>
            <person name="Vannier F."/>
            <person name="Vassarotti A."/>
            <person name="Viari A."/>
            <person name="Wambutt R."/>
            <person name="Wedler E."/>
            <person name="Wedler H."/>
            <person name="Weitzenegger T."/>
            <person name="Winters P."/>
            <person name="Wipat A."/>
            <person name="Yamamoto H."/>
            <person name="Yamane K."/>
            <person name="Yasumoto K."/>
            <person name="Yata K."/>
            <person name="Yoshida K."/>
            <person name="Yoshikawa H.-F."/>
            <person name="Zumstein E."/>
            <person name="Yoshikawa H."/>
            <person name="Danchin A."/>
        </authorList>
    </citation>
    <scope>NUCLEOTIDE SEQUENCE [LARGE SCALE GENOMIC DNA]</scope>
    <source>
        <strain>168</strain>
    </source>
</reference>